<comment type="function">
    <text evidence="1">Probable E3 ubiquitin-protein ligase which accepts ubiquitin from an E2 ubiquitin-conjugating enzyme in the form of a thioester and then directly transfers the ubiquitin to targeted substrates.</text>
</comment>
<comment type="catalytic activity">
    <reaction evidence="1">
        <text>S-ubiquitinyl-[E2 ubiquitin-conjugating enzyme]-L-cysteine + [acceptor protein]-L-lysine = [E2 ubiquitin-conjugating enzyme]-L-cysteine + N(6)-ubiquitinyl-[acceptor protein]-L-lysine.</text>
        <dbReference type="EC" id="2.3.2.27"/>
    </reaction>
</comment>
<comment type="pathway">
    <text>Protein modification; protein ubiquitination.</text>
</comment>
<organism>
    <name type="scientific">White spot syndrome virus (isolate Shrimp/China/Tongan/1996)</name>
    <name type="common">WSSV</name>
    <name type="synonym">White spot bacilliform virus</name>
    <dbReference type="NCBI Taxonomy" id="654913"/>
    <lineage>
        <taxon>Viruses</taxon>
        <taxon>Viruses incertae sedis</taxon>
        <taxon>Naldaviricetes</taxon>
        <taxon>Nimaviridae</taxon>
        <taxon>Whispovirus</taxon>
        <taxon>White spot syndrome virus</taxon>
    </lineage>
</organism>
<name>UB403_WSSVS</name>
<keyword id="KW-0945">Host-virus interaction</keyword>
<keyword id="KW-0479">Metal-binding</keyword>
<keyword id="KW-1128">Modulation of host ubiquitin pathway by viral E3 ligase</keyword>
<keyword id="KW-1130">Modulation of host ubiquitin pathway by virus</keyword>
<keyword id="KW-1185">Reference proteome</keyword>
<keyword id="KW-0808">Transferase</keyword>
<keyword id="KW-0833">Ubl conjugation pathway</keyword>
<keyword id="KW-0862">Zinc</keyword>
<keyword id="KW-0863">Zinc-finger</keyword>
<gene>
    <name type="ORF">WSV403</name>
</gene>
<feature type="chain" id="PRO_0000397866" description="RING finger containing E3 ubiquitin-protein ligase WSV403">
    <location>
        <begin position="1"/>
        <end position="641"/>
    </location>
</feature>
<feature type="zinc finger region" description="RING-type; atypical">
    <location>
        <begin position="329"/>
        <end position="371"/>
    </location>
</feature>
<accession>Q8VAK2</accession>
<accession>Q8VAJ4</accession>
<evidence type="ECO:0000269" key="1">
    <source>
    </source>
</evidence>
<proteinExistence type="evidence at protein level"/>
<protein>
    <recommendedName>
        <fullName>RING finger containing E3 ubiquitin-protein ligase WSV403</fullName>
        <ecNumber evidence="1">2.3.2.27</ecNumber>
    </recommendedName>
    <alternativeName>
        <fullName>RING-type E3 ubiquitin transferase WSV403</fullName>
    </alternativeName>
</protein>
<sequence length="641" mass="74155">MVASTPCPGPGPVPTQELLSTNFLEAHKLVVELLLPSYSSDVVYCDSETYTKPIPIFGNKSIVSTIGDYVLSNPNEDVSYQMVSSVLEKFPLLFHCTYKTNEEDKGIPLWKKLYNKRKFKLLNSLLVHNNKNWTPVPAIPFDRENICDASGRSVLMSEIMSTSTFQTICKNNTHYLFDMLNMERGKQGGSFLHFFASRKNSFTNFENEEMDSHVLSNIAKFICNEKEKLDSFIPANGKIPCPDKTNDEGYIPLEIAIMEDNYPALLYLVCRYGASWANTYGDHNESLKAFAIRNDAKDCLEIIEFISDHYSFNKNVTKEEFVKEKTVECVGCLYDIEDEKRCYKLPCGHFMHTFCLSNKCSKANFRCVKCFQTFDDTIFRKCPPTIQWKMGINQTTNHKEMDLFNRAFDTYLDFICSYNVKLDKKSKPKHKPENKKVEEELAKRTAEIEEAMKKKEEELTKRTAEIEEAIKKKEEELAKRTAEIEEAMKKKEEEELSKYNKIIEKGKRRLNEECVKLRDISTAAINMYKEKVRINGVLLKDSDQELAEAKERLRKILLLEEETKLDRFLFRPKRVEERIFLTKDDETLAFKLALEKKTEDIIAKKNNQKGSERRDGEYTITSHIEKLPQSTALASVCVLNE</sequence>
<dbReference type="EC" id="2.3.2.27" evidence="1"/>
<dbReference type="EMBL" id="AF332093">
    <property type="protein sequence ID" value="AAL33416.2"/>
    <property type="molecule type" value="Genomic_DNA"/>
</dbReference>
<dbReference type="UniPathway" id="UPA00143"/>
<dbReference type="Proteomes" id="UP000000327">
    <property type="component" value="Segment"/>
</dbReference>
<dbReference type="GO" id="GO:0016740">
    <property type="term" value="F:transferase activity"/>
    <property type="evidence" value="ECO:0007669"/>
    <property type="project" value="UniProtKB-KW"/>
</dbReference>
<dbReference type="GO" id="GO:0008270">
    <property type="term" value="F:zinc ion binding"/>
    <property type="evidence" value="ECO:0007669"/>
    <property type="project" value="UniProtKB-KW"/>
</dbReference>
<dbReference type="GO" id="GO:0016567">
    <property type="term" value="P:protein ubiquitination"/>
    <property type="evidence" value="ECO:0007669"/>
    <property type="project" value="UniProtKB-UniPathway"/>
</dbReference>
<dbReference type="GO" id="GO:0039648">
    <property type="term" value="P:symbiont-mediated perturbation of host ubiquitin-like protein modification"/>
    <property type="evidence" value="ECO:0007669"/>
    <property type="project" value="UniProtKB-KW"/>
</dbReference>
<dbReference type="CDD" id="cd16448">
    <property type="entry name" value="RING-H2"/>
    <property type="match status" value="1"/>
</dbReference>
<dbReference type="Gene3D" id="3.30.40.10">
    <property type="entry name" value="Zinc/RING finger domain, C3HC4 (zinc finger)"/>
    <property type="match status" value="1"/>
</dbReference>
<dbReference type="InterPro" id="IPR013083">
    <property type="entry name" value="Znf_RING/FYVE/PHD"/>
</dbReference>
<dbReference type="SUPFAM" id="SSF57850">
    <property type="entry name" value="RING/U-box"/>
    <property type="match status" value="1"/>
</dbReference>
<reference key="1">
    <citation type="journal article" date="2001" name="J. Virol.">
        <title>Complete genome sequence of the shrimp white spot bacilliform virus.</title>
        <authorList>
            <person name="Yang F."/>
            <person name="He J."/>
            <person name="Lin X."/>
            <person name="Li Q."/>
            <person name="Pan D."/>
            <person name="Zhang X."/>
            <person name="Xu X."/>
        </authorList>
    </citation>
    <scope>NUCLEOTIDE SEQUENCE [GENOMIC DNA]</scope>
</reference>
<reference key="2">
    <citation type="journal article" date="2008" name="Virol. J.">
        <title>Identification and characterization of a new E3 ubiquitin ligase in white spot syndrome virus involved in virus latency.</title>
        <authorList>
            <person name="He F."/>
            <person name="Kwang J."/>
        </authorList>
    </citation>
    <scope>FUNCTION</scope>
    <scope>CATALYTIC ACTIVITY</scope>
</reference>
<reference key="3">
    <citation type="submission" date="2014-11" db="EMBL/GenBank/DDBJ databases">
        <authorList>
            <person name="Yang F."/>
            <person name="He J."/>
            <person name="Lin X."/>
            <person name="Li Q."/>
            <person name="Pan D."/>
            <person name="Zhang X."/>
            <person name="Xu X."/>
        </authorList>
    </citation>
    <scope>SEQUENCE REVISION</scope>
</reference>
<organismHost>
    <name type="scientific">Crustacea</name>
    <dbReference type="NCBI Taxonomy" id="6657"/>
</organismHost>